<gene>
    <name evidence="1" type="primary">obg</name>
    <name type="ordered locus">WP0204</name>
</gene>
<accession>B3CNP2</accession>
<comment type="function">
    <text evidence="1">An essential GTPase which binds GTP, GDP and possibly (p)ppGpp with moderate affinity, with high nucleotide exchange rates and a fairly low GTP hydrolysis rate. Plays a role in control of the cell cycle, stress response, ribosome biogenesis and in those bacteria that undergo differentiation, in morphogenesis control.</text>
</comment>
<comment type="cofactor">
    <cofactor evidence="1">
        <name>Mg(2+)</name>
        <dbReference type="ChEBI" id="CHEBI:18420"/>
    </cofactor>
</comment>
<comment type="subunit">
    <text evidence="1">Monomer.</text>
</comment>
<comment type="subcellular location">
    <subcellularLocation>
        <location evidence="1">Cytoplasm</location>
    </subcellularLocation>
</comment>
<comment type="similarity">
    <text evidence="1">Belongs to the TRAFAC class OBG-HflX-like GTPase superfamily. OBG GTPase family.</text>
</comment>
<protein>
    <recommendedName>
        <fullName evidence="1">GTPase Obg</fullName>
        <ecNumber evidence="1">3.6.5.-</ecNumber>
    </recommendedName>
    <alternativeName>
        <fullName evidence="1">GTP-binding protein Obg</fullName>
    </alternativeName>
</protein>
<sequence>MDFIDEVKLYLKAGDGGDGCASFRREKFVEFGGPNGGNGGKGGDIIFISDANLNTLLNFRCRRHIKASSGKSGTSRDRSGTAGKDIILKVPVGTQIIDEESEEVIVDLDKPDMEFQVVQGGKGGLGNTNFKSSTNRAPRHFTHGQPGEERNIVLKLKVLSDVGIIGMPNVGKSKFLTRCSNSDTKVGDYEFTTIRPHLGVAKVDYSEIVIADIPGIIADAHLGVGLGHKFLKHIERCKILLHLIDVTHDEIISAYNCTHNELKLYNSDLVEKEEIVVLNKCDLLEETEILEKKNHLANYLDREVLCLSIDDDLQPILRLLNEKVKTKEINVYDPFKM</sequence>
<feature type="chain" id="PRO_0000386387" description="GTPase Obg">
    <location>
        <begin position="1"/>
        <end position="337"/>
    </location>
</feature>
<feature type="domain" description="Obg" evidence="2">
    <location>
        <begin position="1"/>
        <end position="159"/>
    </location>
</feature>
<feature type="domain" description="OBG-type G" evidence="1">
    <location>
        <begin position="160"/>
        <end position="329"/>
    </location>
</feature>
<feature type="binding site" evidence="1">
    <location>
        <begin position="166"/>
        <end position="173"/>
    </location>
    <ligand>
        <name>GTP</name>
        <dbReference type="ChEBI" id="CHEBI:37565"/>
    </ligand>
</feature>
<feature type="binding site" evidence="1">
    <location>
        <position position="173"/>
    </location>
    <ligand>
        <name>Mg(2+)</name>
        <dbReference type="ChEBI" id="CHEBI:18420"/>
    </ligand>
</feature>
<feature type="binding site" evidence="1">
    <location>
        <begin position="191"/>
        <end position="195"/>
    </location>
    <ligand>
        <name>GTP</name>
        <dbReference type="ChEBI" id="CHEBI:37565"/>
    </ligand>
</feature>
<feature type="binding site" evidence="1">
    <location>
        <position position="193"/>
    </location>
    <ligand>
        <name>Mg(2+)</name>
        <dbReference type="ChEBI" id="CHEBI:18420"/>
    </ligand>
</feature>
<feature type="binding site" evidence="1">
    <location>
        <begin position="212"/>
        <end position="215"/>
    </location>
    <ligand>
        <name>GTP</name>
        <dbReference type="ChEBI" id="CHEBI:37565"/>
    </ligand>
</feature>
<feature type="binding site" evidence="1">
    <location>
        <begin position="279"/>
        <end position="282"/>
    </location>
    <ligand>
        <name>GTP</name>
        <dbReference type="ChEBI" id="CHEBI:37565"/>
    </ligand>
</feature>
<feature type="binding site" evidence="1">
    <location>
        <begin position="310"/>
        <end position="312"/>
    </location>
    <ligand>
        <name>GTP</name>
        <dbReference type="ChEBI" id="CHEBI:37565"/>
    </ligand>
</feature>
<proteinExistence type="inferred from homology"/>
<evidence type="ECO:0000255" key="1">
    <source>
        <dbReference type="HAMAP-Rule" id="MF_01454"/>
    </source>
</evidence>
<evidence type="ECO:0000255" key="2">
    <source>
        <dbReference type="PROSITE-ProRule" id="PRU01231"/>
    </source>
</evidence>
<organism>
    <name type="scientific">Wolbachia pipientis subsp. Culex pipiens (strain wPip)</name>
    <dbReference type="NCBI Taxonomy" id="570417"/>
    <lineage>
        <taxon>Bacteria</taxon>
        <taxon>Pseudomonadati</taxon>
        <taxon>Pseudomonadota</taxon>
        <taxon>Alphaproteobacteria</taxon>
        <taxon>Rickettsiales</taxon>
        <taxon>Anaplasmataceae</taxon>
        <taxon>Wolbachieae</taxon>
        <taxon>Wolbachia</taxon>
    </lineage>
</organism>
<keyword id="KW-0963">Cytoplasm</keyword>
<keyword id="KW-0342">GTP-binding</keyword>
<keyword id="KW-0378">Hydrolase</keyword>
<keyword id="KW-0460">Magnesium</keyword>
<keyword id="KW-0479">Metal-binding</keyword>
<keyword id="KW-0547">Nucleotide-binding</keyword>
<dbReference type="EC" id="3.6.5.-" evidence="1"/>
<dbReference type="EMBL" id="AM999887">
    <property type="protein sequence ID" value="CAQ54312.1"/>
    <property type="molecule type" value="Genomic_DNA"/>
</dbReference>
<dbReference type="SMR" id="B3CNP2"/>
<dbReference type="KEGG" id="wpi:WP0204"/>
<dbReference type="eggNOG" id="COG0536">
    <property type="taxonomic scope" value="Bacteria"/>
</dbReference>
<dbReference type="HOGENOM" id="CLU_011747_2_0_5"/>
<dbReference type="Proteomes" id="UP000008814">
    <property type="component" value="Chromosome"/>
</dbReference>
<dbReference type="GO" id="GO:0005737">
    <property type="term" value="C:cytoplasm"/>
    <property type="evidence" value="ECO:0007669"/>
    <property type="project" value="UniProtKB-SubCell"/>
</dbReference>
<dbReference type="GO" id="GO:0005525">
    <property type="term" value="F:GTP binding"/>
    <property type="evidence" value="ECO:0007669"/>
    <property type="project" value="UniProtKB-UniRule"/>
</dbReference>
<dbReference type="GO" id="GO:0003924">
    <property type="term" value="F:GTPase activity"/>
    <property type="evidence" value="ECO:0007669"/>
    <property type="project" value="UniProtKB-UniRule"/>
</dbReference>
<dbReference type="GO" id="GO:0000287">
    <property type="term" value="F:magnesium ion binding"/>
    <property type="evidence" value="ECO:0007669"/>
    <property type="project" value="InterPro"/>
</dbReference>
<dbReference type="GO" id="GO:0042254">
    <property type="term" value="P:ribosome biogenesis"/>
    <property type="evidence" value="ECO:0007669"/>
    <property type="project" value="UniProtKB-UniRule"/>
</dbReference>
<dbReference type="CDD" id="cd01898">
    <property type="entry name" value="Obg"/>
    <property type="match status" value="1"/>
</dbReference>
<dbReference type="FunFam" id="2.70.210.12:FF:000001">
    <property type="entry name" value="GTPase Obg"/>
    <property type="match status" value="1"/>
</dbReference>
<dbReference type="Gene3D" id="2.70.210.12">
    <property type="entry name" value="GTP1/OBG domain"/>
    <property type="match status" value="1"/>
</dbReference>
<dbReference type="Gene3D" id="3.40.50.300">
    <property type="entry name" value="P-loop containing nucleotide triphosphate hydrolases"/>
    <property type="match status" value="1"/>
</dbReference>
<dbReference type="HAMAP" id="MF_01454">
    <property type="entry name" value="GTPase_Obg"/>
    <property type="match status" value="1"/>
</dbReference>
<dbReference type="InterPro" id="IPR031167">
    <property type="entry name" value="G_OBG"/>
</dbReference>
<dbReference type="InterPro" id="IPR006073">
    <property type="entry name" value="GTP-bd"/>
</dbReference>
<dbReference type="InterPro" id="IPR014100">
    <property type="entry name" value="GTP-bd_Obg/CgtA"/>
</dbReference>
<dbReference type="InterPro" id="IPR006169">
    <property type="entry name" value="GTP1_OBG_dom"/>
</dbReference>
<dbReference type="InterPro" id="IPR036726">
    <property type="entry name" value="GTP1_OBG_dom_sf"/>
</dbReference>
<dbReference type="InterPro" id="IPR045086">
    <property type="entry name" value="OBG_GTPase"/>
</dbReference>
<dbReference type="InterPro" id="IPR027417">
    <property type="entry name" value="P-loop_NTPase"/>
</dbReference>
<dbReference type="NCBIfam" id="TIGR02729">
    <property type="entry name" value="Obg_CgtA"/>
    <property type="match status" value="1"/>
</dbReference>
<dbReference type="NCBIfam" id="NF008955">
    <property type="entry name" value="PRK12297.1"/>
    <property type="match status" value="1"/>
</dbReference>
<dbReference type="NCBIfam" id="NF008956">
    <property type="entry name" value="PRK12299.1"/>
    <property type="match status" value="1"/>
</dbReference>
<dbReference type="PANTHER" id="PTHR11702">
    <property type="entry name" value="DEVELOPMENTALLY REGULATED GTP-BINDING PROTEIN-RELATED"/>
    <property type="match status" value="1"/>
</dbReference>
<dbReference type="PANTHER" id="PTHR11702:SF31">
    <property type="entry name" value="MITOCHONDRIAL RIBOSOME-ASSOCIATED GTPASE 2"/>
    <property type="match status" value="1"/>
</dbReference>
<dbReference type="Pfam" id="PF01018">
    <property type="entry name" value="GTP1_OBG"/>
    <property type="match status" value="1"/>
</dbReference>
<dbReference type="Pfam" id="PF01926">
    <property type="entry name" value="MMR_HSR1"/>
    <property type="match status" value="1"/>
</dbReference>
<dbReference type="PIRSF" id="PIRSF002401">
    <property type="entry name" value="GTP_bd_Obg/CgtA"/>
    <property type="match status" value="1"/>
</dbReference>
<dbReference type="PRINTS" id="PR00326">
    <property type="entry name" value="GTP1OBG"/>
</dbReference>
<dbReference type="SUPFAM" id="SSF82051">
    <property type="entry name" value="Obg GTP-binding protein N-terminal domain"/>
    <property type="match status" value="1"/>
</dbReference>
<dbReference type="SUPFAM" id="SSF52540">
    <property type="entry name" value="P-loop containing nucleoside triphosphate hydrolases"/>
    <property type="match status" value="1"/>
</dbReference>
<dbReference type="PROSITE" id="PS51710">
    <property type="entry name" value="G_OBG"/>
    <property type="match status" value="1"/>
</dbReference>
<dbReference type="PROSITE" id="PS51883">
    <property type="entry name" value="OBG"/>
    <property type="match status" value="1"/>
</dbReference>
<name>OBG_WOLPP</name>
<reference key="1">
    <citation type="journal article" date="2008" name="Mol. Biol. Evol.">
        <title>Genome evolution of Wolbachia strain wPip from the Culex pipiens group.</title>
        <authorList>
            <person name="Klasson L."/>
            <person name="Walker T."/>
            <person name="Sebaihia M."/>
            <person name="Sanders M.J."/>
            <person name="Quail M.A."/>
            <person name="Lord A."/>
            <person name="Sanders S."/>
            <person name="Earl J."/>
            <person name="O'Neill S.L."/>
            <person name="Thomson N."/>
            <person name="Sinkins S.P."/>
            <person name="Parkhill J."/>
        </authorList>
    </citation>
    <scope>NUCLEOTIDE SEQUENCE [LARGE SCALE GENOMIC DNA]</scope>
    <source>
        <strain>wPip</strain>
    </source>
</reference>